<feature type="chain" id="PRO_1000091911" description="3-deoxy-manno-octulosonate cytidylyltransferase">
    <location>
        <begin position="1"/>
        <end position="244"/>
    </location>
</feature>
<sequence length="244" mass="27078">MILIPARLASTRFPRKIVQEILGIPMIVRVAKRAMEVDSTVVASDSLEVVEICRHHGIEAILTSKDHASGTDRIAEAARILELPPHEVILNVQGDEPFLEPEVIASLKEKMQEASLGDSPPFMASAYKKVSQEEASDPNLVKVVLDNHSCALYFSRSPIPFWRDCTESTPLFYRGHLGLYAYTGSSLQAFCALPSSPLEEIEKLEQLRALSHGHKILMIEVETRSFGIDTPQDLNRALKIFGDS</sequence>
<comment type="function">
    <text evidence="1">Activates KDO (a required 8-carbon sugar) for incorporation into bacterial lipopolysaccharide in Gram-negative bacteria.</text>
</comment>
<comment type="catalytic activity">
    <reaction evidence="1">
        <text>3-deoxy-alpha-D-manno-oct-2-ulosonate + CTP = CMP-3-deoxy-beta-D-manno-octulosonate + diphosphate</text>
        <dbReference type="Rhea" id="RHEA:23448"/>
        <dbReference type="ChEBI" id="CHEBI:33019"/>
        <dbReference type="ChEBI" id="CHEBI:37563"/>
        <dbReference type="ChEBI" id="CHEBI:85986"/>
        <dbReference type="ChEBI" id="CHEBI:85987"/>
        <dbReference type="EC" id="2.7.7.38"/>
    </reaction>
</comment>
<comment type="pathway">
    <text evidence="1">Nucleotide-sugar biosynthesis; CMP-3-deoxy-D-manno-octulosonate biosynthesis; CMP-3-deoxy-D-manno-octulosonate from 3-deoxy-D-manno-octulosonate and CTP: step 1/1.</text>
</comment>
<comment type="pathway">
    <text evidence="1">Bacterial outer membrane biogenesis; lipopolysaccharide biosynthesis.</text>
</comment>
<comment type="subcellular location">
    <subcellularLocation>
        <location evidence="1">Cytoplasm</location>
    </subcellularLocation>
</comment>
<comment type="similarity">
    <text evidence="1">Belongs to the KdsB family.</text>
</comment>
<organism>
    <name type="scientific">Wolinella succinogenes (strain ATCC 29543 / DSM 1740 / CCUG 13145 / JCM 31913 / LMG 7466 / NCTC 11488 / FDC 602W)</name>
    <name type="common">Vibrio succinogenes</name>
    <dbReference type="NCBI Taxonomy" id="273121"/>
    <lineage>
        <taxon>Bacteria</taxon>
        <taxon>Pseudomonadati</taxon>
        <taxon>Campylobacterota</taxon>
        <taxon>Epsilonproteobacteria</taxon>
        <taxon>Campylobacterales</taxon>
        <taxon>Helicobacteraceae</taxon>
        <taxon>Wolinella</taxon>
    </lineage>
</organism>
<proteinExistence type="inferred from homology"/>
<gene>
    <name evidence="1" type="primary">kdsB</name>
    <name type="ordered locus">WS1917</name>
</gene>
<reference key="1">
    <citation type="journal article" date="2003" name="Proc. Natl. Acad. Sci. U.S.A.">
        <title>Complete genome sequence and analysis of Wolinella succinogenes.</title>
        <authorList>
            <person name="Baar C."/>
            <person name="Eppinger M."/>
            <person name="Raddatz G."/>
            <person name="Simon J."/>
            <person name="Lanz C."/>
            <person name="Klimmek O."/>
            <person name="Nandakumar R."/>
            <person name="Gross R."/>
            <person name="Rosinus A."/>
            <person name="Keller H."/>
            <person name="Jagtap P."/>
            <person name="Linke B."/>
            <person name="Meyer F."/>
            <person name="Lederer H."/>
            <person name="Schuster S.C."/>
        </authorList>
    </citation>
    <scope>NUCLEOTIDE SEQUENCE [LARGE SCALE GENOMIC DNA]</scope>
    <source>
        <strain>ATCC 29543 / DSM 1740 / CCUG 13145 / JCM 31913 / LMG 7466 / NCTC 11488 / FDC 602W</strain>
    </source>
</reference>
<protein>
    <recommendedName>
        <fullName evidence="1">3-deoxy-manno-octulosonate cytidylyltransferase</fullName>
        <ecNumber evidence="1">2.7.7.38</ecNumber>
    </recommendedName>
    <alternativeName>
        <fullName evidence="1">CMP-2-keto-3-deoxyoctulosonic acid synthase</fullName>
        <shortName evidence="1">CKS</shortName>
        <shortName evidence="1">CMP-KDO synthase</shortName>
    </alternativeName>
</protein>
<accession>Q7M829</accession>
<keyword id="KW-0963">Cytoplasm</keyword>
<keyword id="KW-0448">Lipopolysaccharide biosynthesis</keyword>
<keyword id="KW-0548">Nucleotidyltransferase</keyword>
<keyword id="KW-1185">Reference proteome</keyword>
<keyword id="KW-0808">Transferase</keyword>
<evidence type="ECO:0000255" key="1">
    <source>
        <dbReference type="HAMAP-Rule" id="MF_00057"/>
    </source>
</evidence>
<dbReference type="EC" id="2.7.7.38" evidence="1"/>
<dbReference type="EMBL" id="BX571662">
    <property type="protein sequence ID" value="CAE10926.1"/>
    <property type="molecule type" value="Genomic_DNA"/>
</dbReference>
<dbReference type="RefSeq" id="WP_011139709.1">
    <property type="nucleotide sequence ID" value="NC_005090.1"/>
</dbReference>
<dbReference type="SMR" id="Q7M829"/>
<dbReference type="STRING" id="273121.WS1917"/>
<dbReference type="KEGG" id="wsu:WS1917"/>
<dbReference type="eggNOG" id="COG1212">
    <property type="taxonomic scope" value="Bacteria"/>
</dbReference>
<dbReference type="HOGENOM" id="CLU_065038_0_1_7"/>
<dbReference type="UniPathway" id="UPA00030"/>
<dbReference type="UniPathway" id="UPA00358">
    <property type="reaction ID" value="UER00476"/>
</dbReference>
<dbReference type="Proteomes" id="UP000000422">
    <property type="component" value="Chromosome"/>
</dbReference>
<dbReference type="GO" id="GO:0005829">
    <property type="term" value="C:cytosol"/>
    <property type="evidence" value="ECO:0007669"/>
    <property type="project" value="TreeGrafter"/>
</dbReference>
<dbReference type="GO" id="GO:0008690">
    <property type="term" value="F:3-deoxy-manno-octulosonate cytidylyltransferase activity"/>
    <property type="evidence" value="ECO:0007669"/>
    <property type="project" value="UniProtKB-UniRule"/>
</dbReference>
<dbReference type="GO" id="GO:0033468">
    <property type="term" value="P:CMP-keto-3-deoxy-D-manno-octulosonic acid biosynthetic process"/>
    <property type="evidence" value="ECO:0007669"/>
    <property type="project" value="UniProtKB-UniRule"/>
</dbReference>
<dbReference type="GO" id="GO:0009103">
    <property type="term" value="P:lipopolysaccharide biosynthetic process"/>
    <property type="evidence" value="ECO:0007669"/>
    <property type="project" value="UniProtKB-UniRule"/>
</dbReference>
<dbReference type="CDD" id="cd02517">
    <property type="entry name" value="CMP-KDO-Synthetase"/>
    <property type="match status" value="1"/>
</dbReference>
<dbReference type="Gene3D" id="3.90.550.10">
    <property type="entry name" value="Spore Coat Polysaccharide Biosynthesis Protein SpsA, Chain A"/>
    <property type="match status" value="1"/>
</dbReference>
<dbReference type="HAMAP" id="MF_00057">
    <property type="entry name" value="KdsB"/>
    <property type="match status" value="1"/>
</dbReference>
<dbReference type="InterPro" id="IPR003329">
    <property type="entry name" value="Cytidylyl_trans"/>
</dbReference>
<dbReference type="InterPro" id="IPR004528">
    <property type="entry name" value="KdsB"/>
</dbReference>
<dbReference type="InterPro" id="IPR029044">
    <property type="entry name" value="Nucleotide-diphossugar_trans"/>
</dbReference>
<dbReference type="NCBIfam" id="TIGR00466">
    <property type="entry name" value="kdsB"/>
    <property type="match status" value="1"/>
</dbReference>
<dbReference type="NCBIfam" id="NF003952">
    <property type="entry name" value="PRK05450.1-5"/>
    <property type="match status" value="1"/>
</dbReference>
<dbReference type="PANTHER" id="PTHR42866">
    <property type="entry name" value="3-DEOXY-MANNO-OCTULOSONATE CYTIDYLYLTRANSFERASE"/>
    <property type="match status" value="1"/>
</dbReference>
<dbReference type="PANTHER" id="PTHR42866:SF2">
    <property type="entry name" value="3-DEOXY-MANNO-OCTULOSONATE CYTIDYLYLTRANSFERASE, MITOCHONDRIAL"/>
    <property type="match status" value="1"/>
</dbReference>
<dbReference type="Pfam" id="PF02348">
    <property type="entry name" value="CTP_transf_3"/>
    <property type="match status" value="1"/>
</dbReference>
<dbReference type="SUPFAM" id="SSF53448">
    <property type="entry name" value="Nucleotide-diphospho-sugar transferases"/>
    <property type="match status" value="1"/>
</dbReference>
<name>KDSB_WOLSU</name>